<comment type="function">
    <text evidence="1">Catalyzes the ATP- as well as the pyrophosphate-dependent phosphorylation of a specific serine residue in HPr, a phosphocarrier protein of the phosphoenolpyruvate-dependent sugar phosphotransferase system (PTS). HprK/P also catalyzes the pyrophosphate-producing, inorganic phosphate-dependent dephosphorylation (phosphorolysis) of seryl-phosphorylated HPr (P-Ser-HPr). The two antagonistic activities of HprK/P are regulated by several intracellular metabolites, which change their concentration in response to the absence or presence of rapidly metabolisable carbon sources (glucose, fructose, etc.) in the growth medium. Therefore, by controlling the phosphorylation state of HPr, HPrK/P is a sensor enzyme that plays a major role in the regulation of carbon metabolism and sugar transport: it mediates carbon catabolite repression (CCR), and regulates PTS-catalyzed carbohydrate uptake and inducer exclusion.</text>
</comment>
<comment type="catalytic activity">
    <reaction evidence="1">
        <text>[HPr protein]-L-serine + ATP = [HPr protein]-O-phospho-L-serine + ADP + H(+)</text>
        <dbReference type="Rhea" id="RHEA:46600"/>
        <dbReference type="Rhea" id="RHEA-COMP:11602"/>
        <dbReference type="Rhea" id="RHEA-COMP:11603"/>
        <dbReference type="ChEBI" id="CHEBI:15378"/>
        <dbReference type="ChEBI" id="CHEBI:29999"/>
        <dbReference type="ChEBI" id="CHEBI:30616"/>
        <dbReference type="ChEBI" id="CHEBI:83421"/>
        <dbReference type="ChEBI" id="CHEBI:456216"/>
    </reaction>
</comment>
<comment type="catalytic activity">
    <reaction evidence="1">
        <text>[HPr protein]-O-phospho-L-serine + phosphate + H(+) = [HPr protein]-L-serine + diphosphate</text>
        <dbReference type="Rhea" id="RHEA:46604"/>
        <dbReference type="Rhea" id="RHEA-COMP:11602"/>
        <dbReference type="Rhea" id="RHEA-COMP:11603"/>
        <dbReference type="ChEBI" id="CHEBI:15378"/>
        <dbReference type="ChEBI" id="CHEBI:29999"/>
        <dbReference type="ChEBI" id="CHEBI:33019"/>
        <dbReference type="ChEBI" id="CHEBI:43474"/>
        <dbReference type="ChEBI" id="CHEBI:83421"/>
    </reaction>
</comment>
<comment type="cofactor">
    <cofactor evidence="1">
        <name>Mg(2+)</name>
        <dbReference type="ChEBI" id="CHEBI:18420"/>
    </cofactor>
</comment>
<comment type="subunit">
    <text evidence="1">Homohexamer.</text>
</comment>
<comment type="domain">
    <text evidence="1">The Walker A ATP-binding motif also binds Pi and PPi.</text>
</comment>
<comment type="miscellaneous">
    <text evidence="1">Both phosphorylation and phosphorolysis are carried out by the same active site and suggest a common mechanism for both reactions.</text>
</comment>
<comment type="similarity">
    <text evidence="1">Belongs to the HPrK/P family.</text>
</comment>
<protein>
    <recommendedName>
        <fullName evidence="1">HPr kinase/phosphorylase</fullName>
        <shortName evidence="1">HPrK/P</shortName>
        <ecNumber evidence="1">2.7.11.-</ecNumber>
        <ecNumber evidence="1">2.7.4.-</ecNumber>
    </recommendedName>
    <alternativeName>
        <fullName evidence="1">HPr(Ser) kinase/phosphorylase</fullName>
    </alternativeName>
</protein>
<reference key="1">
    <citation type="journal article" date="2011" name="J. Bacteriol.">
        <title>Complete genome sequence of the Thermophilic Bacterium Exiguobacterium sp. AT1b.</title>
        <authorList>
            <person name="Vishnivetskaya T.A."/>
            <person name="Lucas S."/>
            <person name="Copeland A."/>
            <person name="Lapidus A."/>
            <person name="Glavina del Rio T."/>
            <person name="Dalin E."/>
            <person name="Tice H."/>
            <person name="Bruce D.C."/>
            <person name="Goodwin L.A."/>
            <person name="Pitluck S."/>
            <person name="Saunders E."/>
            <person name="Brettin T."/>
            <person name="Detter C."/>
            <person name="Han C."/>
            <person name="Larimer F."/>
            <person name="Land M.L."/>
            <person name="Hauser L.J."/>
            <person name="Kyrpides N.C."/>
            <person name="Ovchinnikova G."/>
            <person name="Kathariou S."/>
            <person name="Ramaley R.F."/>
            <person name="Rodrigues D.F."/>
            <person name="Hendrix C."/>
            <person name="Richardson P."/>
            <person name="Tiedje J.M."/>
        </authorList>
    </citation>
    <scope>NUCLEOTIDE SEQUENCE [LARGE SCALE GENOMIC DNA]</scope>
    <source>
        <strain>ATCC BAA-1283 / AT1b</strain>
    </source>
</reference>
<name>HPRK_EXISA</name>
<gene>
    <name evidence="1" type="primary">hprK</name>
    <name type="ordered locus">EAT1b_0881</name>
</gene>
<sequence length="311" mass="34299">MQNIVRTAQVVERFKLQVIAGEEGLHRPVATPDLSRPGLVLAGYYTHYAKNRLQVLGKTELTFYASLSEEKRRERAKILCTEQTPGILITRGFDIPKEIEEEAEAANVPLMRTNAVTTSIESQITNFLEMELAPMTAMHGVLVDIYGVGVLIKGQSGVGKSETALELVKRGHRLVADDSVEIRQTGDQLLVGSAPKLIRHLLEIRGIGIIDVMTLFGAGAVRSHKKISLIVNLENWDAGKVYDRVGLDHNTMKIIDSEVPLLTIPVRPGRNLAVIIEVAAMNYRLQNMGINTAEEFAERLANAIQDTEGDL</sequence>
<dbReference type="EC" id="2.7.11.-" evidence="1"/>
<dbReference type="EC" id="2.7.4.-" evidence="1"/>
<dbReference type="EMBL" id="CP001615">
    <property type="protein sequence ID" value="ACQ69810.1"/>
    <property type="molecule type" value="Genomic_DNA"/>
</dbReference>
<dbReference type="RefSeq" id="WP_012726929.1">
    <property type="nucleotide sequence ID" value="NC_012673.1"/>
</dbReference>
<dbReference type="SMR" id="C4L5J5"/>
<dbReference type="STRING" id="360911.EAT1b_0881"/>
<dbReference type="KEGG" id="eat:EAT1b_0881"/>
<dbReference type="eggNOG" id="COG1493">
    <property type="taxonomic scope" value="Bacteria"/>
</dbReference>
<dbReference type="HOGENOM" id="CLU_052030_0_1_9"/>
<dbReference type="OrthoDB" id="9778803at2"/>
<dbReference type="Proteomes" id="UP000000716">
    <property type="component" value="Chromosome"/>
</dbReference>
<dbReference type="GO" id="GO:0005524">
    <property type="term" value="F:ATP binding"/>
    <property type="evidence" value="ECO:0007669"/>
    <property type="project" value="UniProtKB-UniRule"/>
</dbReference>
<dbReference type="GO" id="GO:0000287">
    <property type="term" value="F:magnesium ion binding"/>
    <property type="evidence" value="ECO:0007669"/>
    <property type="project" value="UniProtKB-UniRule"/>
</dbReference>
<dbReference type="GO" id="GO:0000155">
    <property type="term" value="F:phosphorelay sensor kinase activity"/>
    <property type="evidence" value="ECO:0007669"/>
    <property type="project" value="InterPro"/>
</dbReference>
<dbReference type="GO" id="GO:0004674">
    <property type="term" value="F:protein serine/threonine kinase activity"/>
    <property type="evidence" value="ECO:0007669"/>
    <property type="project" value="UniProtKB-KW"/>
</dbReference>
<dbReference type="GO" id="GO:0004712">
    <property type="term" value="F:protein serine/threonine/tyrosine kinase activity"/>
    <property type="evidence" value="ECO:0007669"/>
    <property type="project" value="UniProtKB-UniRule"/>
</dbReference>
<dbReference type="GO" id="GO:0006109">
    <property type="term" value="P:regulation of carbohydrate metabolic process"/>
    <property type="evidence" value="ECO:0007669"/>
    <property type="project" value="UniProtKB-UniRule"/>
</dbReference>
<dbReference type="CDD" id="cd01918">
    <property type="entry name" value="HprK_C"/>
    <property type="match status" value="1"/>
</dbReference>
<dbReference type="FunFam" id="3.40.50.300:FF:000174">
    <property type="entry name" value="HPr kinase/phosphorylase"/>
    <property type="match status" value="1"/>
</dbReference>
<dbReference type="Gene3D" id="3.40.1390.20">
    <property type="entry name" value="HprK N-terminal domain-like"/>
    <property type="match status" value="1"/>
</dbReference>
<dbReference type="Gene3D" id="3.40.50.300">
    <property type="entry name" value="P-loop containing nucleotide triphosphate hydrolases"/>
    <property type="match status" value="1"/>
</dbReference>
<dbReference type="HAMAP" id="MF_01249">
    <property type="entry name" value="HPr_kinase"/>
    <property type="match status" value="1"/>
</dbReference>
<dbReference type="InterPro" id="IPR003755">
    <property type="entry name" value="HPr(Ser)_kin/Pase"/>
</dbReference>
<dbReference type="InterPro" id="IPR011104">
    <property type="entry name" value="Hpr_kin/Pase_C"/>
</dbReference>
<dbReference type="InterPro" id="IPR011126">
    <property type="entry name" value="Hpr_kin/Pase_Hpr_N"/>
</dbReference>
<dbReference type="InterPro" id="IPR027417">
    <property type="entry name" value="P-loop_NTPase"/>
</dbReference>
<dbReference type="InterPro" id="IPR028979">
    <property type="entry name" value="Ser_kin/Pase_Hpr-like_N_sf"/>
</dbReference>
<dbReference type="NCBIfam" id="TIGR00679">
    <property type="entry name" value="hpr-ser"/>
    <property type="match status" value="1"/>
</dbReference>
<dbReference type="PANTHER" id="PTHR30305:SF1">
    <property type="entry name" value="HPR KINASE_PHOSPHORYLASE"/>
    <property type="match status" value="1"/>
</dbReference>
<dbReference type="PANTHER" id="PTHR30305">
    <property type="entry name" value="PROTEIN YJDM-RELATED"/>
    <property type="match status" value="1"/>
</dbReference>
<dbReference type="Pfam" id="PF07475">
    <property type="entry name" value="Hpr_kinase_C"/>
    <property type="match status" value="1"/>
</dbReference>
<dbReference type="Pfam" id="PF02603">
    <property type="entry name" value="Hpr_kinase_N"/>
    <property type="match status" value="1"/>
</dbReference>
<dbReference type="SUPFAM" id="SSF75138">
    <property type="entry name" value="HprK N-terminal domain-like"/>
    <property type="match status" value="1"/>
</dbReference>
<dbReference type="SUPFAM" id="SSF53795">
    <property type="entry name" value="PEP carboxykinase-like"/>
    <property type="match status" value="1"/>
</dbReference>
<keyword id="KW-0067">ATP-binding</keyword>
<keyword id="KW-0119">Carbohydrate metabolism</keyword>
<keyword id="KW-0418">Kinase</keyword>
<keyword id="KW-0460">Magnesium</keyword>
<keyword id="KW-0479">Metal-binding</keyword>
<keyword id="KW-0511">Multifunctional enzyme</keyword>
<keyword id="KW-0547">Nucleotide-binding</keyword>
<keyword id="KW-0723">Serine/threonine-protein kinase</keyword>
<keyword id="KW-0808">Transferase</keyword>
<feature type="chain" id="PRO_1000214108" description="HPr kinase/phosphorylase">
    <location>
        <begin position="1"/>
        <end position="311"/>
    </location>
</feature>
<feature type="region of interest" description="Important for the catalytic mechanism of both phosphorylation and dephosphorylation" evidence="1">
    <location>
        <begin position="202"/>
        <end position="211"/>
    </location>
</feature>
<feature type="region of interest" description="Important for the catalytic mechanism of dephosphorylation" evidence="1">
    <location>
        <begin position="265"/>
        <end position="270"/>
    </location>
</feature>
<feature type="active site" evidence="1">
    <location>
        <position position="139"/>
    </location>
</feature>
<feature type="active site" evidence="1">
    <location>
        <position position="160"/>
    </location>
</feature>
<feature type="active site" description="Proton acceptor; for phosphorylation activity. Proton donor; for dephosphorylation activity" evidence="1">
    <location>
        <position position="178"/>
    </location>
</feature>
<feature type="active site" evidence="1">
    <location>
        <position position="244"/>
    </location>
</feature>
<feature type="binding site" evidence="1">
    <location>
        <begin position="154"/>
        <end position="161"/>
    </location>
    <ligand>
        <name>ATP</name>
        <dbReference type="ChEBI" id="CHEBI:30616"/>
    </ligand>
</feature>
<feature type="binding site" evidence="1">
    <location>
        <position position="161"/>
    </location>
    <ligand>
        <name>Mg(2+)</name>
        <dbReference type="ChEBI" id="CHEBI:18420"/>
    </ligand>
</feature>
<feature type="binding site" evidence="1">
    <location>
        <position position="203"/>
    </location>
    <ligand>
        <name>Mg(2+)</name>
        <dbReference type="ChEBI" id="CHEBI:18420"/>
    </ligand>
</feature>
<organism>
    <name type="scientific">Exiguobacterium sp. (strain ATCC BAA-1283 / AT1b)</name>
    <dbReference type="NCBI Taxonomy" id="360911"/>
    <lineage>
        <taxon>Bacteria</taxon>
        <taxon>Bacillati</taxon>
        <taxon>Bacillota</taxon>
        <taxon>Bacilli</taxon>
        <taxon>Bacillales</taxon>
        <taxon>Bacillales Family XII. Incertae Sedis</taxon>
        <taxon>Exiguobacterium</taxon>
    </lineage>
</organism>
<accession>C4L5J5</accession>
<evidence type="ECO:0000255" key="1">
    <source>
        <dbReference type="HAMAP-Rule" id="MF_01249"/>
    </source>
</evidence>
<proteinExistence type="inferred from homology"/>